<evidence type="ECO:0000255" key="1">
    <source>
        <dbReference type="HAMAP-Rule" id="MF_00500"/>
    </source>
</evidence>
<evidence type="ECO:0000305" key="2"/>
<accession>Q3AZA6</accession>
<comment type="function">
    <text evidence="1">Binds directly to 16S ribosomal RNA.</text>
</comment>
<comment type="similarity">
    <text evidence="1">Belongs to the bacterial ribosomal protein bS20 family.</text>
</comment>
<protein>
    <recommendedName>
        <fullName evidence="1">Small ribosomal subunit protein bS20</fullName>
    </recommendedName>
    <alternativeName>
        <fullName evidence="2">30S ribosomal protein S20</fullName>
    </alternativeName>
</protein>
<proteinExistence type="inferred from homology"/>
<gene>
    <name evidence="1" type="primary">rpsT</name>
    <name evidence="1" type="synonym">rps20</name>
    <name type="ordered locus">Syncc9902_0603</name>
</gene>
<keyword id="KW-1185">Reference proteome</keyword>
<keyword id="KW-0687">Ribonucleoprotein</keyword>
<keyword id="KW-0689">Ribosomal protein</keyword>
<keyword id="KW-0694">RNA-binding</keyword>
<keyword id="KW-0699">rRNA-binding</keyword>
<sequence length="98" mass="10857">MANNNSAKKRIEIAERNRLRNRTYKSSMRTLMKRCFSACDAYGSAPGEEAKASVQASLREAFSKIDKAVKVGVLHRNNGANQKSRLSSAVRKVLEPTS</sequence>
<name>RS20_SYNS9</name>
<reference key="1">
    <citation type="submission" date="2005-08" db="EMBL/GenBank/DDBJ databases">
        <title>Complete sequence of Synechococcus sp. CC9902.</title>
        <authorList>
            <person name="Copeland A."/>
            <person name="Lucas S."/>
            <person name="Lapidus A."/>
            <person name="Barry K."/>
            <person name="Detter J.C."/>
            <person name="Glavina T."/>
            <person name="Hammon N."/>
            <person name="Israni S."/>
            <person name="Pitluck S."/>
            <person name="Martinez M."/>
            <person name="Schmutz J."/>
            <person name="Larimer F."/>
            <person name="Land M."/>
            <person name="Kyrpides N."/>
            <person name="Ivanova N."/>
            <person name="Richardson P."/>
        </authorList>
    </citation>
    <scope>NUCLEOTIDE SEQUENCE [LARGE SCALE GENOMIC DNA]</scope>
    <source>
        <strain>CC9902</strain>
    </source>
</reference>
<feature type="chain" id="PRO_0000236458" description="Small ribosomal subunit protein bS20">
    <location>
        <begin position="1"/>
        <end position="98"/>
    </location>
</feature>
<dbReference type="EMBL" id="CP000097">
    <property type="protein sequence ID" value="ABB25571.1"/>
    <property type="molecule type" value="Genomic_DNA"/>
</dbReference>
<dbReference type="RefSeq" id="WP_011359416.1">
    <property type="nucleotide sequence ID" value="NC_007513.1"/>
</dbReference>
<dbReference type="SMR" id="Q3AZA6"/>
<dbReference type="STRING" id="316279.Syncc9902_0603"/>
<dbReference type="KEGG" id="sye:Syncc9902_0603"/>
<dbReference type="eggNOG" id="COG0268">
    <property type="taxonomic scope" value="Bacteria"/>
</dbReference>
<dbReference type="HOGENOM" id="CLU_160655_5_0_3"/>
<dbReference type="OrthoDB" id="9808392at2"/>
<dbReference type="Proteomes" id="UP000002712">
    <property type="component" value="Chromosome"/>
</dbReference>
<dbReference type="GO" id="GO:0005829">
    <property type="term" value="C:cytosol"/>
    <property type="evidence" value="ECO:0007669"/>
    <property type="project" value="TreeGrafter"/>
</dbReference>
<dbReference type="GO" id="GO:0015935">
    <property type="term" value="C:small ribosomal subunit"/>
    <property type="evidence" value="ECO:0007669"/>
    <property type="project" value="TreeGrafter"/>
</dbReference>
<dbReference type="GO" id="GO:0070181">
    <property type="term" value="F:small ribosomal subunit rRNA binding"/>
    <property type="evidence" value="ECO:0007669"/>
    <property type="project" value="TreeGrafter"/>
</dbReference>
<dbReference type="GO" id="GO:0003735">
    <property type="term" value="F:structural constituent of ribosome"/>
    <property type="evidence" value="ECO:0007669"/>
    <property type="project" value="InterPro"/>
</dbReference>
<dbReference type="GO" id="GO:0006412">
    <property type="term" value="P:translation"/>
    <property type="evidence" value="ECO:0007669"/>
    <property type="project" value="UniProtKB-UniRule"/>
</dbReference>
<dbReference type="FunFam" id="1.20.58.110:FF:000001">
    <property type="entry name" value="30S ribosomal protein S20"/>
    <property type="match status" value="1"/>
</dbReference>
<dbReference type="Gene3D" id="1.20.58.110">
    <property type="entry name" value="Ribosomal protein S20"/>
    <property type="match status" value="1"/>
</dbReference>
<dbReference type="HAMAP" id="MF_00500">
    <property type="entry name" value="Ribosomal_bS20"/>
    <property type="match status" value="1"/>
</dbReference>
<dbReference type="InterPro" id="IPR002583">
    <property type="entry name" value="Ribosomal_bS20"/>
</dbReference>
<dbReference type="InterPro" id="IPR036510">
    <property type="entry name" value="Ribosomal_bS20_sf"/>
</dbReference>
<dbReference type="NCBIfam" id="TIGR00029">
    <property type="entry name" value="S20"/>
    <property type="match status" value="1"/>
</dbReference>
<dbReference type="PANTHER" id="PTHR33398">
    <property type="entry name" value="30S RIBOSOMAL PROTEIN S20"/>
    <property type="match status" value="1"/>
</dbReference>
<dbReference type="PANTHER" id="PTHR33398:SF1">
    <property type="entry name" value="SMALL RIBOSOMAL SUBUNIT PROTEIN BS20C"/>
    <property type="match status" value="1"/>
</dbReference>
<dbReference type="Pfam" id="PF01649">
    <property type="entry name" value="Ribosomal_S20p"/>
    <property type="match status" value="1"/>
</dbReference>
<dbReference type="SUPFAM" id="SSF46992">
    <property type="entry name" value="Ribosomal protein S20"/>
    <property type="match status" value="1"/>
</dbReference>
<organism>
    <name type="scientific">Synechococcus sp. (strain CC9902)</name>
    <dbReference type="NCBI Taxonomy" id="316279"/>
    <lineage>
        <taxon>Bacteria</taxon>
        <taxon>Bacillati</taxon>
        <taxon>Cyanobacteriota</taxon>
        <taxon>Cyanophyceae</taxon>
        <taxon>Synechococcales</taxon>
        <taxon>Synechococcaceae</taxon>
        <taxon>Synechococcus</taxon>
    </lineage>
</organism>